<name>B4_HHV6Z</name>
<sequence length="193" mass="21504">MCVFFCVCIFLCVYFFVCIFLCVFFCVCIFLCVFFCVYFFVCVFFCVCFFVCVFFVCVYAFAHVAVCSVRPRRHVCACSRAYLHHRNGSGVYKKVIRPAGRSAHPPVGRFYTRPLFSLSRATCGPSSGTSAPRPRWRSLTLGGAHGPRGRSLFPPASPRLSLCGSAFCLSFSLARAIVFSLSPGSGARLHLRL</sequence>
<comment type="subcellular location">
    <subcellularLocation>
        <location evidence="2">Host membrane</location>
        <topology evidence="2">Multi-pass membrane protein</topology>
    </subcellularLocation>
</comment>
<organismHost>
    <name type="scientific">Homo sapiens</name>
    <name type="common">Human</name>
    <dbReference type="NCBI Taxonomy" id="9606"/>
</organismHost>
<gene>
    <name type="primary">B4</name>
</gene>
<organism>
    <name type="scientific">Human herpesvirus 6B (strain Z29)</name>
    <name type="common">HHV-6 variant B</name>
    <name type="synonym">Human B lymphotropic virus</name>
    <dbReference type="NCBI Taxonomy" id="36351"/>
    <lineage>
        <taxon>Viruses</taxon>
        <taxon>Duplodnaviria</taxon>
        <taxon>Heunggongvirae</taxon>
        <taxon>Peploviricota</taxon>
        <taxon>Herviviricetes</taxon>
        <taxon>Herpesvirales</taxon>
        <taxon>Orthoherpesviridae</taxon>
        <taxon>Betaherpesvirinae</taxon>
        <taxon>Roseolovirus</taxon>
        <taxon>Roseolovirus humanbeta6b</taxon>
        <taxon>Human herpesvirus 6B</taxon>
    </lineage>
</organism>
<feature type="chain" id="PRO_0000408395" description="Protein B4">
    <location>
        <begin position="1"/>
        <end position="193"/>
    </location>
</feature>
<feature type="transmembrane region" description="Helical" evidence="1">
    <location>
        <begin position="15"/>
        <end position="35"/>
    </location>
</feature>
<feature type="transmembrane region" description="Helical" evidence="1">
    <location>
        <begin position="36"/>
        <end position="56"/>
    </location>
</feature>
<feature type="transmembrane region" description="Helical" evidence="1">
    <location>
        <begin position="160"/>
        <end position="180"/>
    </location>
</feature>
<keyword id="KW-1043">Host membrane</keyword>
<keyword id="KW-0472">Membrane</keyword>
<keyword id="KW-1185">Reference proteome</keyword>
<keyword id="KW-0812">Transmembrane</keyword>
<keyword id="KW-1133">Transmembrane helix</keyword>
<reference key="1">
    <citation type="journal article" date="1999" name="J. Virol.">
        <title>Human herpesvirus 6B genome sequence: coding content and comparison with human herpesvirus 6A.</title>
        <authorList>
            <person name="Dominguez G."/>
            <person name="Dambaugh T.R."/>
            <person name="Stamey F.R."/>
            <person name="Dewhurst S."/>
            <person name="Inoue N."/>
            <person name="Pellett P.E."/>
        </authorList>
    </citation>
    <scope>NUCLEOTIDE SEQUENCE [LARGE SCALE GENOMIC DNA]</scope>
</reference>
<proteinExistence type="predicted"/>
<evidence type="ECO:0000255" key="1"/>
<evidence type="ECO:0000305" key="2"/>
<protein>
    <recommendedName>
        <fullName>Protein B4</fullName>
    </recommendedName>
</protein>
<dbReference type="EMBL" id="AF157706">
    <property type="protein sequence ID" value="AAD49620.1"/>
    <property type="molecule type" value="Genomic_DNA"/>
</dbReference>
<dbReference type="RefSeq" id="NP_050182.1">
    <property type="nucleotide sequence ID" value="NC_000898.1"/>
</dbReference>
<dbReference type="GeneID" id="1497004"/>
<dbReference type="KEGG" id="vg:1497004"/>
<dbReference type="Proteomes" id="UP000006930">
    <property type="component" value="Segment"/>
</dbReference>
<dbReference type="GO" id="GO:0033644">
    <property type="term" value="C:host cell membrane"/>
    <property type="evidence" value="ECO:0007669"/>
    <property type="project" value="UniProtKB-SubCell"/>
</dbReference>
<dbReference type="GO" id="GO:0016020">
    <property type="term" value="C:membrane"/>
    <property type="evidence" value="ECO:0007669"/>
    <property type="project" value="UniProtKB-KW"/>
</dbReference>
<accession>Q9QJ59</accession>